<sequence length="213" mass="23598">MSYAYLFKYIIIGDTGVGKSCLLLQFTDKRFQPVHDLTIGVEFGARMINIDGKQIKLQIWDTAGQESFRSITRSYYRGAAGALLVYDITRRETFNHLASWLEDARQHANPNMTIMLIGNKCDLTHRRAVTTEEGEQFAKEHGLIFLETSARTAHNVEEAFINTAKEIYKKIQDGVFDVSNESYGIKVGYGGGNAGPQTVKPGEGGAAKSSSCC</sequence>
<accession>Q39570</accession>
<keyword id="KW-1003">Cell membrane</keyword>
<keyword id="KW-0342">GTP-binding</keyword>
<keyword id="KW-0449">Lipoprotein</keyword>
<keyword id="KW-0472">Membrane</keyword>
<keyword id="KW-0547">Nucleotide-binding</keyword>
<keyword id="KW-0636">Prenylation</keyword>
<keyword id="KW-0653">Protein transport</keyword>
<keyword id="KW-0813">Transport</keyword>
<feature type="chain" id="PRO_0000121294" description="GTP-binding protein YPTC4">
    <location>
        <begin position="1"/>
        <end position="213"/>
    </location>
</feature>
<feature type="region of interest" description="Disordered" evidence="4">
    <location>
        <begin position="194"/>
        <end position="213"/>
    </location>
</feature>
<feature type="short sequence motif" description="Effector region" evidence="5">
    <location>
        <begin position="35"/>
        <end position="43"/>
    </location>
</feature>
<feature type="binding site" evidence="2">
    <location>
        <begin position="13"/>
        <end position="21"/>
    </location>
    <ligand>
        <name>GTP</name>
        <dbReference type="ChEBI" id="CHEBI:37565"/>
    </ligand>
</feature>
<feature type="binding site" evidence="3">
    <location>
        <begin position="61"/>
        <end position="65"/>
    </location>
    <ligand>
        <name>GTP</name>
        <dbReference type="ChEBI" id="CHEBI:37565"/>
    </ligand>
</feature>
<feature type="binding site" evidence="2">
    <location>
        <begin position="119"/>
        <end position="122"/>
    </location>
    <ligand>
        <name>GTP</name>
        <dbReference type="ChEBI" id="CHEBI:37565"/>
    </ligand>
</feature>
<feature type="binding site" evidence="2">
    <location>
        <begin position="149"/>
        <end position="151"/>
    </location>
    <ligand>
        <name>GTP</name>
        <dbReference type="ChEBI" id="CHEBI:37565"/>
    </ligand>
</feature>
<feature type="lipid moiety-binding region" description="S-geranylgeranyl cysteine" evidence="1">
    <location>
        <position position="212"/>
    </location>
</feature>
<feature type="lipid moiety-binding region" description="S-geranylgeranyl cysteine" evidence="1">
    <location>
        <position position="213"/>
    </location>
</feature>
<organism>
    <name type="scientific">Chlamydomonas reinhardtii</name>
    <name type="common">Chlamydomonas smithii</name>
    <dbReference type="NCBI Taxonomy" id="3055"/>
    <lineage>
        <taxon>Eukaryota</taxon>
        <taxon>Viridiplantae</taxon>
        <taxon>Chlorophyta</taxon>
        <taxon>core chlorophytes</taxon>
        <taxon>Chlorophyceae</taxon>
        <taxon>CS clade</taxon>
        <taxon>Chlamydomonadales</taxon>
        <taxon>Chlamydomonadaceae</taxon>
        <taxon>Chlamydomonas</taxon>
    </lineage>
</organism>
<dbReference type="EMBL" id="U13167">
    <property type="protein sequence ID" value="AAA82726.1"/>
    <property type="molecule type" value="Genomic_DNA"/>
</dbReference>
<dbReference type="PIR" id="JC4106">
    <property type="entry name" value="JC4106"/>
</dbReference>
<dbReference type="SMR" id="Q39570"/>
<dbReference type="PaxDb" id="3055-EDP02222"/>
<dbReference type="eggNOG" id="KOG0098">
    <property type="taxonomic scope" value="Eukaryota"/>
</dbReference>
<dbReference type="GO" id="GO:0005886">
    <property type="term" value="C:plasma membrane"/>
    <property type="evidence" value="ECO:0007669"/>
    <property type="project" value="UniProtKB-SubCell"/>
</dbReference>
<dbReference type="GO" id="GO:0005525">
    <property type="term" value="F:GTP binding"/>
    <property type="evidence" value="ECO:0007669"/>
    <property type="project" value="UniProtKB-KW"/>
</dbReference>
<dbReference type="GO" id="GO:0003924">
    <property type="term" value="F:GTPase activity"/>
    <property type="evidence" value="ECO:0007669"/>
    <property type="project" value="InterPro"/>
</dbReference>
<dbReference type="GO" id="GO:0015031">
    <property type="term" value="P:protein transport"/>
    <property type="evidence" value="ECO:0007669"/>
    <property type="project" value="UniProtKB-KW"/>
</dbReference>
<dbReference type="CDD" id="cd01866">
    <property type="entry name" value="Rab2"/>
    <property type="match status" value="1"/>
</dbReference>
<dbReference type="FunFam" id="3.40.50.300:FF:000263">
    <property type="entry name" value="Ras-related protein RABB1c"/>
    <property type="match status" value="1"/>
</dbReference>
<dbReference type="Gene3D" id="3.40.50.300">
    <property type="entry name" value="P-loop containing nucleotide triphosphate hydrolases"/>
    <property type="match status" value="1"/>
</dbReference>
<dbReference type="InterPro" id="IPR027417">
    <property type="entry name" value="P-loop_NTPase"/>
</dbReference>
<dbReference type="InterPro" id="IPR050209">
    <property type="entry name" value="Rab_GTPases_membrane_traffic"/>
</dbReference>
<dbReference type="InterPro" id="IPR005225">
    <property type="entry name" value="Small_GTP-bd"/>
</dbReference>
<dbReference type="InterPro" id="IPR001806">
    <property type="entry name" value="Small_GTPase"/>
</dbReference>
<dbReference type="NCBIfam" id="TIGR00231">
    <property type="entry name" value="small_GTP"/>
    <property type="match status" value="1"/>
</dbReference>
<dbReference type="PANTHER" id="PTHR47979">
    <property type="entry name" value="DRAB11-RELATED"/>
    <property type="match status" value="1"/>
</dbReference>
<dbReference type="Pfam" id="PF00071">
    <property type="entry name" value="Ras"/>
    <property type="match status" value="1"/>
</dbReference>
<dbReference type="PRINTS" id="PR00449">
    <property type="entry name" value="RASTRNSFRMNG"/>
</dbReference>
<dbReference type="SMART" id="SM00175">
    <property type="entry name" value="RAB"/>
    <property type="match status" value="1"/>
</dbReference>
<dbReference type="SMART" id="SM00176">
    <property type="entry name" value="RAN"/>
    <property type="match status" value="1"/>
</dbReference>
<dbReference type="SMART" id="SM00173">
    <property type="entry name" value="RAS"/>
    <property type="match status" value="1"/>
</dbReference>
<dbReference type="SMART" id="SM00174">
    <property type="entry name" value="RHO"/>
    <property type="match status" value="1"/>
</dbReference>
<dbReference type="SUPFAM" id="SSF52540">
    <property type="entry name" value="P-loop containing nucleoside triphosphate hydrolases"/>
    <property type="match status" value="1"/>
</dbReference>
<dbReference type="PROSITE" id="PS51419">
    <property type="entry name" value="RAB"/>
    <property type="match status" value="1"/>
</dbReference>
<comment type="function">
    <text evidence="1">Protein transport. Probably involved in vesicular traffic (By similarity).</text>
</comment>
<comment type="subcellular location">
    <subcellularLocation>
        <location evidence="5">Cell membrane</location>
        <topology evidence="5">Lipid-anchor</topology>
        <orientation evidence="5">Cytoplasmic side</orientation>
    </subcellularLocation>
</comment>
<comment type="similarity">
    <text evidence="5">Belongs to the small GTPase superfamily. Rab family.</text>
</comment>
<protein>
    <recommendedName>
        <fullName>GTP-binding protein YPTC4</fullName>
    </recommendedName>
</protein>
<gene>
    <name type="primary">YPTC4</name>
</gene>
<name>YPTC4_CHLRE</name>
<reference key="1">
    <citation type="journal article" date="1995" name="Gene">
        <title>Analysis of a family of ypt genes and their products from Chlamydomonas reinhardtii.</title>
        <authorList>
            <person name="Dietmaier W."/>
            <person name="Fabry S."/>
            <person name="Huber H."/>
            <person name="Schmitt R."/>
        </authorList>
    </citation>
    <scope>NUCLEOTIDE SEQUENCE [GENOMIC DNA]</scope>
    <source>
        <strain>cw15</strain>
    </source>
</reference>
<evidence type="ECO:0000250" key="1"/>
<evidence type="ECO:0000250" key="2">
    <source>
        <dbReference type="UniProtKB" id="P61019"/>
    </source>
</evidence>
<evidence type="ECO:0000250" key="3">
    <source>
        <dbReference type="UniProtKB" id="P62820"/>
    </source>
</evidence>
<evidence type="ECO:0000256" key="4">
    <source>
        <dbReference type="SAM" id="MobiDB-lite"/>
    </source>
</evidence>
<evidence type="ECO:0000305" key="5"/>
<proteinExistence type="inferred from homology"/>